<dbReference type="EC" id="3.2.2.27" evidence="1"/>
<dbReference type="EMBL" id="CP001657">
    <property type="protein sequence ID" value="ACT14105.1"/>
    <property type="molecule type" value="Genomic_DNA"/>
</dbReference>
<dbReference type="RefSeq" id="WP_015841253.1">
    <property type="nucleotide sequence ID" value="NC_012917.1"/>
</dbReference>
<dbReference type="SMR" id="C6DC11"/>
<dbReference type="STRING" id="561230.PC1_3082"/>
<dbReference type="KEGG" id="pct:PC1_3082"/>
<dbReference type="eggNOG" id="COG0692">
    <property type="taxonomic scope" value="Bacteria"/>
</dbReference>
<dbReference type="HOGENOM" id="CLU_032162_3_0_6"/>
<dbReference type="OrthoDB" id="9804372at2"/>
<dbReference type="Proteomes" id="UP000002736">
    <property type="component" value="Chromosome"/>
</dbReference>
<dbReference type="GO" id="GO:0005737">
    <property type="term" value="C:cytoplasm"/>
    <property type="evidence" value="ECO:0007669"/>
    <property type="project" value="UniProtKB-SubCell"/>
</dbReference>
<dbReference type="GO" id="GO:0004844">
    <property type="term" value="F:uracil DNA N-glycosylase activity"/>
    <property type="evidence" value="ECO:0007669"/>
    <property type="project" value="UniProtKB-UniRule"/>
</dbReference>
<dbReference type="GO" id="GO:0097510">
    <property type="term" value="P:base-excision repair, AP site formation via deaminated base removal"/>
    <property type="evidence" value="ECO:0007669"/>
    <property type="project" value="TreeGrafter"/>
</dbReference>
<dbReference type="CDD" id="cd10027">
    <property type="entry name" value="UDG-F1-like"/>
    <property type="match status" value="1"/>
</dbReference>
<dbReference type="FunFam" id="3.40.470.10:FF:000001">
    <property type="entry name" value="Uracil-DNA glycosylase"/>
    <property type="match status" value="1"/>
</dbReference>
<dbReference type="Gene3D" id="3.40.470.10">
    <property type="entry name" value="Uracil-DNA glycosylase-like domain"/>
    <property type="match status" value="1"/>
</dbReference>
<dbReference type="HAMAP" id="MF_00148">
    <property type="entry name" value="UDG"/>
    <property type="match status" value="1"/>
</dbReference>
<dbReference type="InterPro" id="IPR002043">
    <property type="entry name" value="UDG_fam1"/>
</dbReference>
<dbReference type="InterPro" id="IPR018085">
    <property type="entry name" value="Ura-DNA_Glyclase_AS"/>
</dbReference>
<dbReference type="InterPro" id="IPR005122">
    <property type="entry name" value="Uracil-DNA_glycosylase-like"/>
</dbReference>
<dbReference type="InterPro" id="IPR036895">
    <property type="entry name" value="Uracil-DNA_glycosylase-like_sf"/>
</dbReference>
<dbReference type="NCBIfam" id="NF003588">
    <property type="entry name" value="PRK05254.1-1"/>
    <property type="match status" value="1"/>
</dbReference>
<dbReference type="NCBIfam" id="NF003589">
    <property type="entry name" value="PRK05254.1-2"/>
    <property type="match status" value="1"/>
</dbReference>
<dbReference type="NCBIfam" id="NF003591">
    <property type="entry name" value="PRK05254.1-4"/>
    <property type="match status" value="1"/>
</dbReference>
<dbReference type="NCBIfam" id="NF003592">
    <property type="entry name" value="PRK05254.1-5"/>
    <property type="match status" value="1"/>
</dbReference>
<dbReference type="NCBIfam" id="TIGR00628">
    <property type="entry name" value="ung"/>
    <property type="match status" value="1"/>
</dbReference>
<dbReference type="PANTHER" id="PTHR11264">
    <property type="entry name" value="URACIL-DNA GLYCOSYLASE"/>
    <property type="match status" value="1"/>
</dbReference>
<dbReference type="PANTHER" id="PTHR11264:SF0">
    <property type="entry name" value="URACIL-DNA GLYCOSYLASE"/>
    <property type="match status" value="1"/>
</dbReference>
<dbReference type="Pfam" id="PF03167">
    <property type="entry name" value="UDG"/>
    <property type="match status" value="1"/>
</dbReference>
<dbReference type="SMART" id="SM00986">
    <property type="entry name" value="UDG"/>
    <property type="match status" value="1"/>
</dbReference>
<dbReference type="SMART" id="SM00987">
    <property type="entry name" value="UreE_C"/>
    <property type="match status" value="1"/>
</dbReference>
<dbReference type="SUPFAM" id="SSF52141">
    <property type="entry name" value="Uracil-DNA glycosylase-like"/>
    <property type="match status" value="1"/>
</dbReference>
<dbReference type="PROSITE" id="PS00130">
    <property type="entry name" value="U_DNA_GLYCOSYLASE"/>
    <property type="match status" value="1"/>
</dbReference>
<gene>
    <name evidence="1" type="primary">ung</name>
    <name type="ordered locus">PC1_3082</name>
</gene>
<feature type="chain" id="PRO_1000203377" description="Uracil-DNA glycosylase">
    <location>
        <begin position="1"/>
        <end position="228"/>
    </location>
</feature>
<feature type="active site" description="Proton acceptor" evidence="1">
    <location>
        <position position="64"/>
    </location>
</feature>
<name>UNG_PECCP</name>
<protein>
    <recommendedName>
        <fullName evidence="1">Uracil-DNA glycosylase</fullName>
        <shortName evidence="1">UDG</shortName>
        <ecNumber evidence="1">3.2.2.27</ecNumber>
    </recommendedName>
</protein>
<keyword id="KW-0963">Cytoplasm</keyword>
<keyword id="KW-0227">DNA damage</keyword>
<keyword id="KW-0234">DNA repair</keyword>
<keyword id="KW-0378">Hydrolase</keyword>
<reference key="1">
    <citation type="submission" date="2009-07" db="EMBL/GenBank/DDBJ databases">
        <title>Complete sequence of Pectobacterium carotovorum subsp. carotovorum PC1.</title>
        <authorList>
            <consortium name="US DOE Joint Genome Institute"/>
            <person name="Lucas S."/>
            <person name="Copeland A."/>
            <person name="Lapidus A."/>
            <person name="Glavina del Rio T."/>
            <person name="Tice H."/>
            <person name="Bruce D."/>
            <person name="Goodwin L."/>
            <person name="Pitluck S."/>
            <person name="Munk A.C."/>
            <person name="Brettin T."/>
            <person name="Detter J.C."/>
            <person name="Han C."/>
            <person name="Tapia R."/>
            <person name="Larimer F."/>
            <person name="Land M."/>
            <person name="Hauser L."/>
            <person name="Kyrpides N."/>
            <person name="Mikhailova N."/>
            <person name="Balakrishnan V."/>
            <person name="Glasner J."/>
            <person name="Perna N.T."/>
        </authorList>
    </citation>
    <scope>NUCLEOTIDE SEQUENCE [LARGE SCALE GENOMIC DNA]</scope>
    <source>
        <strain>PC1</strain>
    </source>
</reference>
<comment type="function">
    <text evidence="1">Excises uracil residues from the DNA which can arise as a result of misincorporation of dUMP residues by DNA polymerase or due to deamination of cytosine.</text>
</comment>
<comment type="catalytic activity">
    <reaction evidence="1">
        <text>Hydrolyzes single-stranded DNA or mismatched double-stranded DNA and polynucleotides, releasing free uracil.</text>
        <dbReference type="EC" id="3.2.2.27"/>
    </reaction>
</comment>
<comment type="subcellular location">
    <subcellularLocation>
        <location evidence="1">Cytoplasm</location>
    </subcellularLocation>
</comment>
<comment type="similarity">
    <text evidence="1">Belongs to the uracil-DNA glycosylase (UDG) superfamily. UNG family.</text>
</comment>
<accession>C6DC11</accession>
<proteinExistence type="inferred from homology"/>
<sequence>MATSLTWHDVLAQEKQQPYFINTLEFVGKERAAGKTIYPPQKDVFNAFRFTELHQVKVVILGQDPYHGPNQAHGLSFSVRPGVPAPPSLANIYKELASDIPGFEIPRHGFLQSWAEQGVLLLNTVLTVEAGQAHSHANLGWETFTDRVIAALNEQREGLVFLLWGSHAQKKGNIIDQRRHHILKSPHPSPLSAHRGFLGCKHFSQANQLLEQQGLSPIDWTPRLPEEA</sequence>
<organism>
    <name type="scientific">Pectobacterium carotovorum subsp. carotovorum (strain PC1)</name>
    <dbReference type="NCBI Taxonomy" id="561230"/>
    <lineage>
        <taxon>Bacteria</taxon>
        <taxon>Pseudomonadati</taxon>
        <taxon>Pseudomonadota</taxon>
        <taxon>Gammaproteobacteria</taxon>
        <taxon>Enterobacterales</taxon>
        <taxon>Pectobacteriaceae</taxon>
        <taxon>Pectobacterium</taxon>
    </lineage>
</organism>
<evidence type="ECO:0000255" key="1">
    <source>
        <dbReference type="HAMAP-Rule" id="MF_00148"/>
    </source>
</evidence>